<comment type="function">
    <text evidence="1 2 3">Produces lacrymatory factor (propanthial S-oxide) from 1-propenylsulphenic acid, an unstable compound resulting from the degradation of trans-1-propenyl-L-cysteine sulphoxide (PRENCSO) by alliinase.</text>
</comment>
<comment type="catalytic activity">
    <reaction evidence="1">
        <text>(E)-prop-1-en-1-SO-peroxol = (Z)-propanethial S-oxide</text>
        <dbReference type="Rhea" id="RHEA:69340"/>
        <dbReference type="ChEBI" id="CHEBI:183057"/>
        <dbReference type="ChEBI" id="CHEBI:183657"/>
        <dbReference type="EC" id="5.3.99.12"/>
    </reaction>
</comment>
<comment type="catalytic activity">
    <reaction evidence="1">
        <text>(E)-alk-1-en-1-SO-peroxol = (Z)-alkanethial oxide</text>
        <dbReference type="Rhea" id="RHEA:69336"/>
        <dbReference type="ChEBI" id="CHEBI:183056"/>
        <dbReference type="ChEBI" id="CHEBI:183059"/>
        <dbReference type="EC" id="5.3.99.12"/>
    </reaction>
</comment>
<comment type="subcellular location">
    <subcellularLocation>
        <location evidence="6">Vacuole</location>
    </subcellularLocation>
</comment>
<comment type="biotechnology">
    <text evidence="2">Silencing lachrymatory-factor synthase (LFS) by RNA interference results in a non-lachrymal onion that still retains its characteristic flavor and high nutritional value.</text>
</comment>
<comment type="online information" name="Protein Spotlight">
    <link uri="https://www.proteinspotlight.org/back_issues/028"/>
    <text>No LFS, no cry - Issue 28 of November 2002</text>
</comment>
<keyword id="KW-0002">3D-structure</keyword>
<keyword id="KW-0903">Direct protein sequencing</keyword>
<keyword id="KW-0413">Isomerase</keyword>
<keyword id="KW-0926">Vacuole</keyword>
<name>LFS_ALLCE</name>
<proteinExistence type="evidence at protein level"/>
<accession>P59082</accession>
<dbReference type="EC" id="5.3.99.12" evidence="1"/>
<dbReference type="EMBL" id="AB089203">
    <property type="protein sequence ID" value="BAC21275.1"/>
    <property type="molecule type" value="mRNA"/>
</dbReference>
<dbReference type="PDB" id="5GTE">
    <property type="method" value="X-ray"/>
    <property type="resolution" value="2.00 A"/>
    <property type="chains" value="A/B/C/D=1-169"/>
</dbReference>
<dbReference type="PDB" id="5GTF">
    <property type="method" value="X-ray"/>
    <property type="resolution" value="1.80 A"/>
    <property type="chains" value="A/B/C/D=1-169"/>
</dbReference>
<dbReference type="PDB" id="5GTG">
    <property type="method" value="X-ray"/>
    <property type="resolution" value="1.70 A"/>
    <property type="chains" value="A/B/C/D/E/F/G/H=1-169"/>
</dbReference>
<dbReference type="PDB" id="5VGL">
    <property type="method" value="X-ray"/>
    <property type="resolution" value="1.40 A"/>
    <property type="chains" value="A=25-169"/>
</dbReference>
<dbReference type="PDB" id="5VGS">
    <property type="method" value="X-ray"/>
    <property type="resolution" value="1.90 A"/>
    <property type="chains" value="A=25-169"/>
</dbReference>
<dbReference type="PDB" id="6IES">
    <property type="method" value="X-ray"/>
    <property type="resolution" value="1.80 A"/>
    <property type="chains" value="A/B=1-169"/>
</dbReference>
<dbReference type="PDBsum" id="5GTE"/>
<dbReference type="PDBsum" id="5GTF"/>
<dbReference type="PDBsum" id="5GTG"/>
<dbReference type="PDBsum" id="5VGL"/>
<dbReference type="PDBsum" id="5VGS"/>
<dbReference type="PDBsum" id="6IES"/>
<dbReference type="SMR" id="P59082"/>
<dbReference type="KEGG" id="ag:BAC21275"/>
<dbReference type="BioCyc" id="MetaCyc:MONOMER-13498"/>
<dbReference type="GO" id="GO:0005773">
    <property type="term" value="C:vacuole"/>
    <property type="evidence" value="ECO:0007669"/>
    <property type="project" value="UniProtKB-SubCell"/>
</dbReference>
<dbReference type="GO" id="GO:0016853">
    <property type="term" value="F:isomerase activity"/>
    <property type="evidence" value="ECO:0007669"/>
    <property type="project" value="UniProtKB-KW"/>
</dbReference>
<dbReference type="CDD" id="cd07821">
    <property type="entry name" value="PYR_PYL_RCAR_like"/>
    <property type="match status" value="1"/>
</dbReference>
<dbReference type="Gene3D" id="3.30.530.20">
    <property type="match status" value="1"/>
</dbReference>
<dbReference type="InterPro" id="IPR053249">
    <property type="entry name" value="LFS"/>
</dbReference>
<dbReference type="InterPro" id="IPR019587">
    <property type="entry name" value="Polyketide_cyclase/dehydratase"/>
</dbReference>
<dbReference type="InterPro" id="IPR023393">
    <property type="entry name" value="START-like_dom_sf"/>
</dbReference>
<dbReference type="PANTHER" id="PTHR33789">
    <property type="entry name" value="LACHRYMATORY-FACTOR SYNTHASE"/>
    <property type="match status" value="1"/>
</dbReference>
<dbReference type="PANTHER" id="PTHR33789:SF11">
    <property type="entry name" value="OS05G0202300 PROTEIN"/>
    <property type="match status" value="1"/>
</dbReference>
<dbReference type="Pfam" id="PF10604">
    <property type="entry name" value="Polyketide_cyc2"/>
    <property type="match status" value="1"/>
</dbReference>
<dbReference type="SUPFAM" id="SSF55961">
    <property type="entry name" value="Bet v1-like"/>
    <property type="match status" value="1"/>
</dbReference>
<sequence>MELNPGAPAVVADSANGARKWSGKVHALLPNTKPEQAWTLLKDFINLHKVMPSLSVCELVEGEANVVGCVRYVKGIMHPIEEEFWAKEKLVALDNKNMSYSYIFTECFTGYEDYTATMQIVEGPEHKGSRFDWSFQCKYIEGMTESAFTEILQHWATEIGQKIEEVCSA</sequence>
<organism>
    <name type="scientific">Allium cepa</name>
    <name type="common">Onion</name>
    <dbReference type="NCBI Taxonomy" id="4679"/>
    <lineage>
        <taxon>Eukaryota</taxon>
        <taxon>Viridiplantae</taxon>
        <taxon>Streptophyta</taxon>
        <taxon>Embryophyta</taxon>
        <taxon>Tracheophyta</taxon>
        <taxon>Spermatophyta</taxon>
        <taxon>Magnoliopsida</taxon>
        <taxon>Liliopsida</taxon>
        <taxon>Asparagales</taxon>
        <taxon>Amaryllidaceae</taxon>
        <taxon>Allioideae</taxon>
        <taxon>Allieae</taxon>
        <taxon>Allium</taxon>
    </lineage>
</organism>
<gene>
    <name evidence="5" type="primary">LFS</name>
</gene>
<feature type="propeptide" id="PRO_0000021591" evidence="1">
    <location>
        <begin position="1"/>
        <end position="12"/>
    </location>
</feature>
<feature type="chain" id="PRO_0000021592" description="Lachrymatory-factor synthase">
    <location>
        <begin position="13"/>
        <end position="169"/>
    </location>
</feature>
<feature type="active site" description="Proton donor/acceptor" evidence="7">
    <location>
        <position position="88"/>
    </location>
</feature>
<feature type="active site" description="Proton donor/acceptor" evidence="7">
    <location>
        <position position="102"/>
    </location>
</feature>
<feature type="site" description="Lowers pKa of active site Glu" evidence="4">
    <location>
        <position position="88"/>
    </location>
</feature>
<feature type="mutagenesis site" description="Abolishes enzyme activity; when associated with Q-88." evidence="3">
    <original>R</original>
    <variation>L</variation>
    <location>
        <position position="71"/>
    </location>
</feature>
<feature type="mutagenesis site" description="Abolishes enzyme activity; when associated with L-71." evidence="3">
    <original>E</original>
    <variation>Q</variation>
    <location>
        <position position="88"/>
    </location>
</feature>
<feature type="strand" evidence="8">
    <location>
        <begin position="25"/>
        <end position="29"/>
    </location>
</feature>
<feature type="helix" evidence="8">
    <location>
        <begin position="34"/>
        <end position="41"/>
    </location>
</feature>
<feature type="helix" evidence="8">
    <location>
        <begin position="44"/>
        <end position="50"/>
    </location>
</feature>
<feature type="strand" evidence="8">
    <location>
        <begin position="54"/>
        <end position="63"/>
    </location>
</feature>
<feature type="strand" evidence="8">
    <location>
        <begin position="70"/>
        <end position="77"/>
    </location>
</feature>
<feature type="turn" evidence="8">
    <location>
        <begin position="78"/>
        <end position="81"/>
    </location>
</feature>
<feature type="strand" evidence="8">
    <location>
        <begin position="82"/>
        <end position="94"/>
    </location>
</feature>
<feature type="turn" evidence="8">
    <location>
        <begin position="95"/>
        <end position="98"/>
    </location>
</feature>
<feature type="strand" evidence="8">
    <location>
        <begin position="99"/>
        <end position="109"/>
    </location>
</feature>
<feature type="strand" evidence="8">
    <location>
        <begin position="111"/>
        <end position="113"/>
    </location>
</feature>
<feature type="strand" evidence="8">
    <location>
        <begin position="115"/>
        <end position="122"/>
    </location>
</feature>
<feature type="helix" evidence="8">
    <location>
        <begin position="124"/>
        <end position="126"/>
    </location>
</feature>
<feature type="strand" evidence="8">
    <location>
        <begin position="128"/>
        <end position="141"/>
    </location>
</feature>
<feature type="helix" evidence="8">
    <location>
        <begin position="145"/>
        <end position="167"/>
    </location>
</feature>
<evidence type="ECO:0000269" key="1">
    <source>
    </source>
</evidence>
<evidence type="ECO:0000269" key="2">
    <source>
    </source>
</evidence>
<evidence type="ECO:0000269" key="3">
    <source>
    </source>
</evidence>
<evidence type="ECO:0000269" key="4">
    <source>
    </source>
</evidence>
<evidence type="ECO:0000303" key="5">
    <source>
    </source>
</evidence>
<evidence type="ECO:0000305" key="6"/>
<evidence type="ECO:0000305" key="7">
    <source>
    </source>
</evidence>
<evidence type="ECO:0007829" key="8">
    <source>
        <dbReference type="PDB" id="5VGL"/>
    </source>
</evidence>
<protein>
    <recommendedName>
        <fullName evidence="5">Lachrymatory-factor synthase</fullName>
        <ecNumber evidence="1">5.3.99.12</ecNumber>
    </recommendedName>
</protein>
<reference key="1">
    <citation type="journal article" date="2002" name="Nature">
        <title>An onion enzyme that makes the eyes water.</title>
        <authorList>
            <person name="Imai S."/>
            <person name="Tsuge N."/>
            <person name="Tomotake M."/>
            <person name="Nagatome Y."/>
            <person name="Sawada H."/>
            <person name="Nagata T."/>
            <person name="Kumagai H."/>
        </authorList>
    </citation>
    <scope>NUCLEOTIDE SEQUENCE [MRNA]</scope>
    <scope>PROTEIN SEQUENCE OF 13-22</scope>
    <scope>FUNCTION</scope>
    <scope>CATALYTIC ACTIVITY</scope>
</reference>
<reference key="2">
    <citation type="journal article" date="2008" name="Plant Physiol.">
        <title>Silencing onion lachrymatory factor synthase causes a significant change in the sulfur secondary metabolite profile.</title>
        <authorList>
            <person name="Eady C.C."/>
            <person name="Kamoi T."/>
            <person name="Kato M."/>
            <person name="Porter N.G."/>
            <person name="Davis S."/>
            <person name="Shaw M."/>
            <person name="Kamoi A."/>
            <person name="Imai S."/>
        </authorList>
    </citation>
    <scope>FUNCTION</scope>
    <scope>BIOTECHNOLOGY</scope>
</reference>
<reference key="3">
    <citation type="journal article" date="2012" name="Biosci. Biotechnol. Biochem.">
        <title>Identification of amino acid residues essential for onion lachrymatory factor synthase activity.</title>
        <authorList>
            <person name="Masamura N."/>
            <person name="Ohashi W."/>
            <person name="Tsuge N."/>
            <person name="Imai S."/>
            <person name="Ishii-Nakamura A."/>
            <person name="Hirota H."/>
            <person name="Nagata T."/>
            <person name="Kumagai H."/>
        </authorList>
    </citation>
    <scope>FUNCTION</scope>
    <scope>MUTAGENESIS OF ARG-71 AND GLU-88</scope>
</reference>
<reference key="4">
    <citation type="journal article" date="2017" name="ACS Chem. Biol.">
        <title>Enzyme that makes you cry-crystal structure of lachrymatory factor synthase from Allium cepa.</title>
        <authorList>
            <person name="Silvaroli J.A."/>
            <person name="Pleshinger M.J."/>
            <person name="Banerjee S."/>
            <person name="Kiser P.D."/>
            <person name="Golczak M."/>
        </authorList>
    </citation>
    <scope>X-RAY CRYSTALLOGRAPHY (1.40 ANGSTROMS) OF 25-169</scope>
    <scope>REACTION MECHANISM</scope>
    <scope>ACTIVE SITE</scope>
</reference>
<reference key="5">
    <citation type="journal article" date="2020" name="ACS Catal.">
        <title>Dissecting the stereocontrolled conversion of short-lived sulfenic acid by lachrymatory factor synthase.</title>
        <authorList>
            <person name="Arakawa T."/>
            <person name="Sato Y."/>
            <person name="Yamada M."/>
            <person name="Takabe J."/>
            <person name="Yoshitaka Moriwaki Y."/>
            <person name="Masamura N."/>
            <person name="Kato M."/>
            <person name="Aoyagi M."/>
            <person name="Kamoi T."/>
            <person name="Terada T."/>
            <person name="Shimizu K."/>
            <person name="Tsuge N."/>
            <person name="Imai S."/>
            <person name="Fushinobu S."/>
        </authorList>
    </citation>
    <scope>X-RAY CRYSTALLOGRAPHY (1.70 ANGSTROMS)</scope>
</reference>